<accession>Q86YJ5</accession>
<accession>B2R9U9</accession>
<accession>Q86VN5</accession>
<accession>Q96GG2</accession>
<proteinExistence type="evidence at protein level"/>
<organism>
    <name type="scientific">Homo sapiens</name>
    <name type="common">Human</name>
    <dbReference type="NCBI Taxonomy" id="9606"/>
    <lineage>
        <taxon>Eukaryota</taxon>
        <taxon>Metazoa</taxon>
        <taxon>Chordata</taxon>
        <taxon>Craniata</taxon>
        <taxon>Vertebrata</taxon>
        <taxon>Euteleostomi</taxon>
        <taxon>Mammalia</taxon>
        <taxon>Eutheria</taxon>
        <taxon>Euarchontoglires</taxon>
        <taxon>Primates</taxon>
        <taxon>Haplorrhini</taxon>
        <taxon>Catarrhini</taxon>
        <taxon>Hominidae</taxon>
        <taxon>Homo</taxon>
    </lineage>
</organism>
<comment type="function">
    <text evidence="4 6">E3 ubiquitin-protein ligase that may mediate ubiquitination of MHC-I, CD4 and ICAM1, and promote their subsequent endocytosis and sorting to lysosomes via multivesicular bodies. E3 ubiquitin ligases accept ubiquitin from an E2 ubiquitin-conjugating enzyme in the form of a thioester and then directly transfer the ubiquitin to targeted substrates.</text>
</comment>
<comment type="catalytic activity">
    <reaction>
        <text>S-ubiquitinyl-[E2 ubiquitin-conjugating enzyme]-L-cysteine + [acceptor protein]-L-lysine = [E2 ubiquitin-conjugating enzyme]-L-cysteine + N(6)-ubiquitinyl-[acceptor protein]-L-lysine.</text>
        <dbReference type="EC" id="2.3.2.27"/>
    </reaction>
</comment>
<comment type="pathway">
    <text>Protein modification; protein ubiquitination.</text>
</comment>
<comment type="subunit">
    <text evidence="6">Homodimer.</text>
</comment>
<comment type="subcellular location">
    <subcellularLocation>
        <location evidence="4">Golgi apparatus membrane</location>
        <topology evidence="1">Multi-pass membrane protein</topology>
    </subcellularLocation>
    <subcellularLocation>
        <location evidence="6">Lysosome membrane</location>
        <topology evidence="1">Multi-pass membrane protein</topology>
    </subcellularLocation>
</comment>
<comment type="alternative products">
    <event type="alternative splicing"/>
    <isoform>
        <id>Q86YJ5-1</id>
        <name>1</name>
        <sequence type="displayed"/>
    </isoform>
    <isoform>
        <id>Q86YJ5-2</id>
        <name>2</name>
        <name>RINGless</name>
        <sequence type="described" ref="VSP_022697"/>
    </isoform>
</comment>
<comment type="tissue specificity">
    <text evidence="4">Ubiquitously expressed.</text>
</comment>
<comment type="domain">
    <text>The RING-CH-type zinc finger domain is required for E3 ligase activity.</text>
</comment>
<comment type="miscellaneous">
    <molecule>Isoform 2</molecule>
    <text evidence="9">Has no E3 activity due to lack of RINGv-type zinc finger domain but is able to dimerize with and stabilize isoform 1.</text>
</comment>
<comment type="sequence caution" evidence="9">
    <conflict type="erroneous initiation">
        <sequence resource="EMBL-CDS" id="AAH50397"/>
    </conflict>
    <text>Extended N-terminus.</text>
</comment>
<sequence length="346" mass="37772">MLKSRLRMFLNELKLLVLTGGGRPRAEPQPRGGRGGGCGWAPFAGCSTRDGDGDEEEYYGSEPRARGLAGDKEPRAGPLPPPAPPLPPPGALDALSLSSSLDSGLRTPQCRICFQGPEQGELLSPCRCDGSVRCTHQPCLIRWISERGSWSCELCYFKYQVLAISTKNPLQWQAISLTVIEKVQIAAIVLGSLFLVASISWLIWSSLSPSAKWQRQDLLFQICYGMYGFMDVVCIGLIIHEGSSVYRIFKRWQAVNQQWKVLNYDKTKDIGGDAGGGTAGKSGPRNSRTGPTSGATSRPPAAQRMRTLLPQRCGYTILHLLGQLRPPDARSSSHSGREVVMRVTTV</sequence>
<evidence type="ECO:0000255" key="1"/>
<evidence type="ECO:0000255" key="2">
    <source>
        <dbReference type="PROSITE-ProRule" id="PRU00623"/>
    </source>
</evidence>
<evidence type="ECO:0000256" key="3">
    <source>
        <dbReference type="SAM" id="MobiDB-lite"/>
    </source>
</evidence>
<evidence type="ECO:0000269" key="4">
    <source>
    </source>
</evidence>
<evidence type="ECO:0000269" key="5">
    <source>
    </source>
</evidence>
<evidence type="ECO:0000269" key="6">
    <source>
    </source>
</evidence>
<evidence type="ECO:0000303" key="7">
    <source>
    </source>
</evidence>
<evidence type="ECO:0000303" key="8">
    <source>
    </source>
</evidence>
<evidence type="ECO:0000305" key="9"/>
<evidence type="ECO:0000312" key="10">
    <source>
        <dbReference type="HGNC" id="HGNC:25139"/>
    </source>
</evidence>
<name>MARH9_HUMAN</name>
<gene>
    <name evidence="10" type="primary">MARCHF9</name>
    <name type="synonym">MARCH9</name>
    <name type="synonym">RNF179</name>
</gene>
<dbReference type="EC" id="2.3.2.27"/>
<dbReference type="EMBL" id="AK313925">
    <property type="protein sequence ID" value="BAG36646.1"/>
    <property type="molecule type" value="mRNA"/>
</dbReference>
<dbReference type="EMBL" id="CH471054">
    <property type="protein sequence ID" value="EAW97065.1"/>
    <property type="molecule type" value="Genomic_DNA"/>
</dbReference>
<dbReference type="EMBL" id="BC009489">
    <property type="protein sequence ID" value="AAH09489.1"/>
    <property type="molecule type" value="mRNA"/>
</dbReference>
<dbReference type="EMBL" id="BC036455">
    <property type="protein sequence ID" value="AAH36455.2"/>
    <property type="molecule type" value="mRNA"/>
</dbReference>
<dbReference type="EMBL" id="BC050397">
    <property type="protein sequence ID" value="AAH50397.1"/>
    <property type="status" value="ALT_INIT"/>
    <property type="molecule type" value="mRNA"/>
</dbReference>
<dbReference type="CCDS" id="CCDS31847.1">
    <molecule id="Q86YJ5-1"/>
</dbReference>
<dbReference type="RefSeq" id="NP_612405.2">
    <molecule id="Q86YJ5-1"/>
    <property type="nucleotide sequence ID" value="NM_138396.5"/>
</dbReference>
<dbReference type="SMR" id="Q86YJ5"/>
<dbReference type="BioGRID" id="124992">
    <property type="interactions" value="7"/>
</dbReference>
<dbReference type="FunCoup" id="Q86YJ5">
    <property type="interactions" value="182"/>
</dbReference>
<dbReference type="IntAct" id="Q86YJ5">
    <property type="interactions" value="5"/>
</dbReference>
<dbReference type="MINT" id="Q86YJ5"/>
<dbReference type="STRING" id="9606.ENSP00000266643"/>
<dbReference type="GlyGen" id="Q86YJ5">
    <property type="glycosylation" value="1 site"/>
</dbReference>
<dbReference type="iPTMnet" id="Q86YJ5"/>
<dbReference type="PhosphoSitePlus" id="Q86YJ5"/>
<dbReference type="BioMuta" id="MARCH9"/>
<dbReference type="DMDM" id="74759533"/>
<dbReference type="jPOST" id="Q86YJ5"/>
<dbReference type="MassIVE" id="Q86YJ5"/>
<dbReference type="PaxDb" id="9606-ENSP00000266643"/>
<dbReference type="PeptideAtlas" id="Q86YJ5"/>
<dbReference type="ProteomicsDB" id="70419">
    <molecule id="Q86YJ5-1"/>
</dbReference>
<dbReference type="ProteomicsDB" id="70420">
    <molecule id="Q86YJ5-2"/>
</dbReference>
<dbReference type="Antibodypedia" id="28932">
    <property type="antibodies" value="156 antibodies from 21 providers"/>
</dbReference>
<dbReference type="DNASU" id="92979"/>
<dbReference type="Ensembl" id="ENST00000266643.6">
    <molecule id="Q86YJ5-1"/>
    <property type="protein sequence ID" value="ENSP00000266643.5"/>
    <property type="gene ID" value="ENSG00000139266.6"/>
</dbReference>
<dbReference type="Ensembl" id="ENST00000548358.1">
    <molecule id="Q86YJ5-2"/>
    <property type="protein sequence ID" value="ENSP00000446758.1"/>
    <property type="gene ID" value="ENSG00000139266.6"/>
</dbReference>
<dbReference type="GeneID" id="92979"/>
<dbReference type="KEGG" id="hsa:92979"/>
<dbReference type="MANE-Select" id="ENST00000266643.6">
    <property type="protein sequence ID" value="ENSP00000266643.5"/>
    <property type="RefSeq nucleotide sequence ID" value="NM_138396.6"/>
    <property type="RefSeq protein sequence ID" value="NP_612405.2"/>
</dbReference>
<dbReference type="UCSC" id="uc001spx.3">
    <molecule id="Q86YJ5-1"/>
    <property type="organism name" value="human"/>
</dbReference>
<dbReference type="AGR" id="HGNC:25139"/>
<dbReference type="CTD" id="92979"/>
<dbReference type="GeneCards" id="MARCHF9"/>
<dbReference type="HGNC" id="HGNC:25139">
    <property type="gene designation" value="MARCHF9"/>
</dbReference>
<dbReference type="HPA" id="ENSG00000139266">
    <property type="expression patterns" value="Low tissue specificity"/>
</dbReference>
<dbReference type="MIM" id="613336">
    <property type="type" value="gene"/>
</dbReference>
<dbReference type="neXtProt" id="NX_Q86YJ5"/>
<dbReference type="OpenTargets" id="ENSG00000139266"/>
<dbReference type="PharmGKB" id="PA134920045"/>
<dbReference type="VEuPathDB" id="HostDB:ENSG00000139266"/>
<dbReference type="eggNOG" id="KOG1609">
    <property type="taxonomic scope" value="Eukaryota"/>
</dbReference>
<dbReference type="GeneTree" id="ENSGT00940000158208"/>
<dbReference type="HOGENOM" id="CLU_045217_0_0_1"/>
<dbReference type="InParanoid" id="Q86YJ5"/>
<dbReference type="OMA" id="PNMFKYR"/>
<dbReference type="OrthoDB" id="264354at2759"/>
<dbReference type="PAN-GO" id="Q86YJ5">
    <property type="GO annotations" value="3 GO annotations based on evolutionary models"/>
</dbReference>
<dbReference type="PhylomeDB" id="Q86YJ5"/>
<dbReference type="TreeFam" id="TF319557"/>
<dbReference type="PathwayCommons" id="Q86YJ5"/>
<dbReference type="SignaLink" id="Q86YJ5"/>
<dbReference type="SIGNOR" id="Q86YJ5"/>
<dbReference type="UniPathway" id="UPA00143"/>
<dbReference type="BioGRID-ORCS" id="92979">
    <property type="hits" value="60 hits in 1118 CRISPR screens"/>
</dbReference>
<dbReference type="ChiTaRS" id="MARCH9">
    <property type="organism name" value="human"/>
</dbReference>
<dbReference type="GenomeRNAi" id="92979"/>
<dbReference type="Pharos" id="Q86YJ5">
    <property type="development level" value="Tbio"/>
</dbReference>
<dbReference type="PRO" id="PR:Q86YJ5"/>
<dbReference type="Proteomes" id="UP000005640">
    <property type="component" value="Chromosome 12"/>
</dbReference>
<dbReference type="RNAct" id="Q86YJ5">
    <property type="molecule type" value="protein"/>
</dbReference>
<dbReference type="Bgee" id="ENSG00000139266">
    <property type="expression patterns" value="Expressed in adenohypophysis and 128 other cell types or tissues"/>
</dbReference>
<dbReference type="GO" id="GO:0000139">
    <property type="term" value="C:Golgi membrane"/>
    <property type="evidence" value="ECO:0007669"/>
    <property type="project" value="UniProtKB-SubCell"/>
</dbReference>
<dbReference type="GO" id="GO:0005795">
    <property type="term" value="C:Golgi stack"/>
    <property type="evidence" value="ECO:0000314"/>
    <property type="project" value="UniProtKB"/>
</dbReference>
<dbReference type="GO" id="GO:0005765">
    <property type="term" value="C:lysosomal membrane"/>
    <property type="evidence" value="ECO:0007669"/>
    <property type="project" value="UniProtKB-SubCell"/>
</dbReference>
<dbReference type="GO" id="GO:0005802">
    <property type="term" value="C:trans-Golgi network"/>
    <property type="evidence" value="ECO:0000314"/>
    <property type="project" value="UniProtKB"/>
</dbReference>
<dbReference type="GO" id="GO:0004842">
    <property type="term" value="F:ubiquitin-protein transferase activity"/>
    <property type="evidence" value="ECO:0000318"/>
    <property type="project" value="GO_Central"/>
</dbReference>
<dbReference type="GO" id="GO:0008270">
    <property type="term" value="F:zinc ion binding"/>
    <property type="evidence" value="ECO:0007669"/>
    <property type="project" value="UniProtKB-KW"/>
</dbReference>
<dbReference type="GO" id="GO:0016567">
    <property type="term" value="P:protein ubiquitination"/>
    <property type="evidence" value="ECO:0007669"/>
    <property type="project" value="UniProtKB-UniPathway"/>
</dbReference>
<dbReference type="CDD" id="cd16811">
    <property type="entry name" value="RING_CH-C4HC3_MARCH4_9"/>
    <property type="match status" value="1"/>
</dbReference>
<dbReference type="FunFam" id="3.30.40.10:FF:000209">
    <property type="entry name" value="E3 ubiquitin-protein ligase MARCH4"/>
    <property type="match status" value="1"/>
</dbReference>
<dbReference type="Gene3D" id="3.30.40.10">
    <property type="entry name" value="Zinc/RING finger domain, C3HC4 (zinc finger)"/>
    <property type="match status" value="1"/>
</dbReference>
<dbReference type="InterPro" id="IPR046356">
    <property type="entry name" value="MARCHF4/9/11"/>
</dbReference>
<dbReference type="InterPro" id="IPR047904">
    <property type="entry name" value="MARCHF9_RING_CH-C4HC3"/>
</dbReference>
<dbReference type="InterPro" id="IPR011016">
    <property type="entry name" value="Znf_RING-CH"/>
</dbReference>
<dbReference type="InterPro" id="IPR013083">
    <property type="entry name" value="Znf_RING/FYVE/PHD"/>
</dbReference>
<dbReference type="PANTHER" id="PTHR46053">
    <property type="entry name" value="E3 UBIQUITIN-PROTEIN LIGASE MARCH4-LIKE"/>
    <property type="match status" value="1"/>
</dbReference>
<dbReference type="PANTHER" id="PTHR46053:SF4">
    <property type="entry name" value="E3 UBIQUITIN-PROTEIN LIGASE MARCHF9"/>
    <property type="match status" value="1"/>
</dbReference>
<dbReference type="Pfam" id="PF12906">
    <property type="entry name" value="RINGv"/>
    <property type="match status" value="1"/>
</dbReference>
<dbReference type="SMART" id="SM00744">
    <property type="entry name" value="RINGv"/>
    <property type="match status" value="1"/>
</dbReference>
<dbReference type="SUPFAM" id="SSF57850">
    <property type="entry name" value="RING/U-box"/>
    <property type="match status" value="1"/>
</dbReference>
<dbReference type="PROSITE" id="PS51292">
    <property type="entry name" value="ZF_RING_CH"/>
    <property type="match status" value="1"/>
</dbReference>
<protein>
    <recommendedName>
        <fullName>E3 ubiquitin-protein ligase MARCHF9</fullName>
        <ecNumber>2.3.2.27</ecNumber>
    </recommendedName>
    <alternativeName>
        <fullName>Membrane-associated RING finger protein 9</fullName>
    </alternativeName>
    <alternativeName>
        <fullName>Membrane-associated RING-CH protein IX</fullName>
        <shortName>MARCH-IX</shortName>
    </alternativeName>
    <alternativeName>
        <fullName>RING finger protein 179</fullName>
    </alternativeName>
    <alternativeName>
        <fullName evidence="9">RING-type E3 ubiquitin transferase MARCHF9</fullName>
    </alternativeName>
</protein>
<keyword id="KW-0025">Alternative splicing</keyword>
<keyword id="KW-0333">Golgi apparatus</keyword>
<keyword id="KW-0458">Lysosome</keyword>
<keyword id="KW-0472">Membrane</keyword>
<keyword id="KW-0479">Metal-binding</keyword>
<keyword id="KW-1267">Proteomics identification</keyword>
<keyword id="KW-1185">Reference proteome</keyword>
<keyword id="KW-0808">Transferase</keyword>
<keyword id="KW-0812">Transmembrane</keyword>
<keyword id="KW-1133">Transmembrane helix</keyword>
<keyword id="KW-0833">Ubl conjugation pathway</keyword>
<keyword id="KW-0862">Zinc</keyword>
<keyword id="KW-0863">Zinc-finger</keyword>
<reference key="1">
    <citation type="journal article" date="2004" name="Nat. Genet.">
        <title>Complete sequencing and characterization of 21,243 full-length human cDNAs.</title>
        <authorList>
            <person name="Ota T."/>
            <person name="Suzuki Y."/>
            <person name="Nishikawa T."/>
            <person name="Otsuki T."/>
            <person name="Sugiyama T."/>
            <person name="Irie R."/>
            <person name="Wakamatsu A."/>
            <person name="Hayashi K."/>
            <person name="Sato H."/>
            <person name="Nagai K."/>
            <person name="Kimura K."/>
            <person name="Makita H."/>
            <person name="Sekine M."/>
            <person name="Obayashi M."/>
            <person name="Nishi T."/>
            <person name="Shibahara T."/>
            <person name="Tanaka T."/>
            <person name="Ishii S."/>
            <person name="Yamamoto J."/>
            <person name="Saito K."/>
            <person name="Kawai Y."/>
            <person name="Isono Y."/>
            <person name="Nakamura Y."/>
            <person name="Nagahari K."/>
            <person name="Murakami K."/>
            <person name="Yasuda T."/>
            <person name="Iwayanagi T."/>
            <person name="Wagatsuma M."/>
            <person name="Shiratori A."/>
            <person name="Sudo H."/>
            <person name="Hosoiri T."/>
            <person name="Kaku Y."/>
            <person name="Kodaira H."/>
            <person name="Kondo H."/>
            <person name="Sugawara M."/>
            <person name="Takahashi M."/>
            <person name="Kanda K."/>
            <person name="Yokoi T."/>
            <person name="Furuya T."/>
            <person name="Kikkawa E."/>
            <person name="Omura Y."/>
            <person name="Abe K."/>
            <person name="Kamihara K."/>
            <person name="Katsuta N."/>
            <person name="Sato K."/>
            <person name="Tanikawa M."/>
            <person name="Yamazaki M."/>
            <person name="Ninomiya K."/>
            <person name="Ishibashi T."/>
            <person name="Yamashita H."/>
            <person name="Murakawa K."/>
            <person name="Fujimori K."/>
            <person name="Tanai H."/>
            <person name="Kimata M."/>
            <person name="Watanabe M."/>
            <person name="Hiraoka S."/>
            <person name="Chiba Y."/>
            <person name="Ishida S."/>
            <person name="Ono Y."/>
            <person name="Takiguchi S."/>
            <person name="Watanabe S."/>
            <person name="Yosida M."/>
            <person name="Hotuta T."/>
            <person name="Kusano J."/>
            <person name="Kanehori K."/>
            <person name="Takahashi-Fujii A."/>
            <person name="Hara H."/>
            <person name="Tanase T.-O."/>
            <person name="Nomura Y."/>
            <person name="Togiya S."/>
            <person name="Komai F."/>
            <person name="Hara R."/>
            <person name="Takeuchi K."/>
            <person name="Arita M."/>
            <person name="Imose N."/>
            <person name="Musashino K."/>
            <person name="Yuuki H."/>
            <person name="Oshima A."/>
            <person name="Sasaki N."/>
            <person name="Aotsuka S."/>
            <person name="Yoshikawa Y."/>
            <person name="Matsunawa H."/>
            <person name="Ichihara T."/>
            <person name="Shiohata N."/>
            <person name="Sano S."/>
            <person name="Moriya S."/>
            <person name="Momiyama H."/>
            <person name="Satoh N."/>
            <person name="Takami S."/>
            <person name="Terashima Y."/>
            <person name="Suzuki O."/>
            <person name="Nakagawa S."/>
            <person name="Senoh A."/>
            <person name="Mizoguchi H."/>
            <person name="Goto Y."/>
            <person name="Shimizu F."/>
            <person name="Wakebe H."/>
            <person name="Hishigaki H."/>
            <person name="Watanabe T."/>
            <person name="Sugiyama A."/>
            <person name="Takemoto M."/>
            <person name="Kawakami B."/>
            <person name="Yamazaki M."/>
            <person name="Watanabe K."/>
            <person name="Kumagai A."/>
            <person name="Itakura S."/>
            <person name="Fukuzumi Y."/>
            <person name="Fujimori Y."/>
            <person name="Komiyama M."/>
            <person name="Tashiro H."/>
            <person name="Tanigami A."/>
            <person name="Fujiwara T."/>
            <person name="Ono T."/>
            <person name="Yamada K."/>
            <person name="Fujii Y."/>
            <person name="Ozaki K."/>
            <person name="Hirao M."/>
            <person name="Ohmori Y."/>
            <person name="Kawabata A."/>
            <person name="Hikiji T."/>
            <person name="Kobatake N."/>
            <person name="Inagaki H."/>
            <person name="Ikema Y."/>
            <person name="Okamoto S."/>
            <person name="Okitani R."/>
            <person name="Kawakami T."/>
            <person name="Noguchi S."/>
            <person name="Itoh T."/>
            <person name="Shigeta K."/>
            <person name="Senba T."/>
            <person name="Matsumura K."/>
            <person name="Nakajima Y."/>
            <person name="Mizuno T."/>
            <person name="Morinaga M."/>
            <person name="Sasaki M."/>
            <person name="Togashi T."/>
            <person name="Oyama M."/>
            <person name="Hata H."/>
            <person name="Watanabe M."/>
            <person name="Komatsu T."/>
            <person name="Mizushima-Sugano J."/>
            <person name="Satoh T."/>
            <person name="Shirai Y."/>
            <person name="Takahashi Y."/>
            <person name="Nakagawa K."/>
            <person name="Okumura K."/>
            <person name="Nagase T."/>
            <person name="Nomura N."/>
            <person name="Kikuchi H."/>
            <person name="Masuho Y."/>
            <person name="Yamashita R."/>
            <person name="Nakai K."/>
            <person name="Yada T."/>
            <person name="Nakamura Y."/>
            <person name="Ohara O."/>
            <person name="Isogai T."/>
            <person name="Sugano S."/>
        </authorList>
    </citation>
    <scope>NUCLEOTIDE SEQUENCE [LARGE SCALE MRNA] (ISOFORM 2)</scope>
    <source>
        <tissue>Brain</tissue>
    </source>
</reference>
<reference key="2">
    <citation type="submission" date="2005-07" db="EMBL/GenBank/DDBJ databases">
        <authorList>
            <person name="Mural R.J."/>
            <person name="Istrail S."/>
            <person name="Sutton G.G."/>
            <person name="Florea L."/>
            <person name="Halpern A.L."/>
            <person name="Mobarry C.M."/>
            <person name="Lippert R."/>
            <person name="Walenz B."/>
            <person name="Shatkay H."/>
            <person name="Dew I."/>
            <person name="Miller J.R."/>
            <person name="Flanigan M.J."/>
            <person name="Edwards N.J."/>
            <person name="Bolanos R."/>
            <person name="Fasulo D."/>
            <person name="Halldorsson B.V."/>
            <person name="Hannenhalli S."/>
            <person name="Turner R."/>
            <person name="Yooseph S."/>
            <person name="Lu F."/>
            <person name="Nusskern D.R."/>
            <person name="Shue B.C."/>
            <person name="Zheng X.H."/>
            <person name="Zhong F."/>
            <person name="Delcher A.L."/>
            <person name="Huson D.H."/>
            <person name="Kravitz S.A."/>
            <person name="Mouchard L."/>
            <person name="Reinert K."/>
            <person name="Remington K.A."/>
            <person name="Clark A.G."/>
            <person name="Waterman M.S."/>
            <person name="Eichler E.E."/>
            <person name="Adams M.D."/>
            <person name="Hunkapiller M.W."/>
            <person name="Myers E.W."/>
            <person name="Venter J.C."/>
        </authorList>
    </citation>
    <scope>NUCLEOTIDE SEQUENCE [LARGE SCALE GENOMIC DNA]</scope>
</reference>
<reference key="3">
    <citation type="journal article" date="2004" name="Genome Res.">
        <title>The status, quality, and expansion of the NIH full-length cDNA project: the Mammalian Gene Collection (MGC).</title>
        <authorList>
            <consortium name="The MGC Project Team"/>
        </authorList>
    </citation>
    <scope>NUCLEOTIDE SEQUENCE [LARGE SCALE MRNA] (ISOFORMS 1 AND 2)</scope>
    <scope>VARIANTS HIS-257 AND PRO-307</scope>
    <source>
        <tissue>Brain</tissue>
        <tissue>Lung</tissue>
    </source>
</reference>
<reference key="4">
    <citation type="journal article" date="2004" name="J. Virol.">
        <title>Downregulation of major histocompatibility complex class I by human ubiquitin ligases related to viral immune evasion proteins.</title>
        <authorList>
            <person name="Bartee E."/>
            <person name="Mansouri M."/>
            <person name="Hovey Nerenberg B.T."/>
            <person name="Gouveia K."/>
            <person name="Frueh K."/>
        </authorList>
    </citation>
    <scope>FUNCTION</scope>
    <scope>TISSUE SPECIFICITY</scope>
    <scope>SUBCELLULAR LOCATION</scope>
</reference>
<reference key="5">
    <citation type="journal article" date="2007" name="FEBS Lett.">
        <title>MARCH-IX mediates ubiquitination and downregulation of ICAM-1.</title>
        <authorList>
            <person name="Hoer S."/>
            <person name="Smith L."/>
            <person name="Lehner P.J."/>
        </authorList>
    </citation>
    <scope>FUNCTION</scope>
    <scope>SUBCELLULAR LOCATION</scope>
    <scope>SUBUNIT</scope>
    <scope>MUTAGENESIS OF ASP-231</scope>
</reference>
<feature type="chain" id="PRO_0000274282" description="E3 ubiquitin-protein ligase MARCHF9">
    <location>
        <begin position="1"/>
        <end position="346"/>
    </location>
</feature>
<feature type="transmembrane region" description="Helical" evidence="1">
    <location>
        <begin position="185"/>
        <end position="205"/>
    </location>
</feature>
<feature type="transmembrane region" description="Helical" evidence="1">
    <location>
        <begin position="219"/>
        <end position="239"/>
    </location>
</feature>
<feature type="zinc finger region" description="RING-CH-type" evidence="2">
    <location>
        <begin position="102"/>
        <end position="162"/>
    </location>
</feature>
<feature type="region of interest" description="Disordered" evidence="3">
    <location>
        <begin position="20"/>
        <end position="39"/>
    </location>
</feature>
<feature type="region of interest" description="Disordered" evidence="3">
    <location>
        <begin position="47"/>
        <end position="92"/>
    </location>
</feature>
<feature type="region of interest" description="Disordered" evidence="3">
    <location>
        <begin position="273"/>
        <end position="301"/>
    </location>
</feature>
<feature type="region of interest" description="Disordered" evidence="3">
    <location>
        <begin position="326"/>
        <end position="346"/>
    </location>
</feature>
<feature type="compositionally biased region" description="Basic and acidic residues" evidence="3">
    <location>
        <begin position="63"/>
        <end position="75"/>
    </location>
</feature>
<feature type="compositionally biased region" description="Pro residues" evidence="3">
    <location>
        <begin position="77"/>
        <end position="90"/>
    </location>
</feature>
<feature type="compositionally biased region" description="Polar residues" evidence="3">
    <location>
        <begin position="284"/>
        <end position="296"/>
    </location>
</feature>
<feature type="binding site" evidence="2">
    <location>
        <position position="110"/>
    </location>
    <ligand>
        <name>Zn(2+)</name>
        <dbReference type="ChEBI" id="CHEBI:29105"/>
        <label>1</label>
    </ligand>
</feature>
<feature type="binding site" evidence="2">
    <location>
        <position position="113"/>
    </location>
    <ligand>
        <name>Zn(2+)</name>
        <dbReference type="ChEBI" id="CHEBI:29105"/>
        <label>1</label>
    </ligand>
</feature>
<feature type="binding site" evidence="2">
    <location>
        <position position="126"/>
    </location>
    <ligand>
        <name>Zn(2+)</name>
        <dbReference type="ChEBI" id="CHEBI:29105"/>
        <label>2</label>
    </ligand>
</feature>
<feature type="binding site" evidence="2">
    <location>
        <position position="128"/>
    </location>
    <ligand>
        <name>Zn(2+)</name>
        <dbReference type="ChEBI" id="CHEBI:29105"/>
        <label>2</label>
    </ligand>
</feature>
<feature type="binding site" evidence="2">
    <location>
        <position position="136"/>
    </location>
    <ligand>
        <name>Zn(2+)</name>
        <dbReference type="ChEBI" id="CHEBI:29105"/>
        <label>1</label>
    </ligand>
</feature>
<feature type="binding site" evidence="2">
    <location>
        <position position="139"/>
    </location>
    <ligand>
        <name>Zn(2+)</name>
        <dbReference type="ChEBI" id="CHEBI:29105"/>
        <label>1</label>
    </ligand>
</feature>
<feature type="binding site" evidence="2">
    <location>
        <position position="152"/>
    </location>
    <ligand>
        <name>Zn(2+)</name>
        <dbReference type="ChEBI" id="CHEBI:29105"/>
        <label>2</label>
    </ligand>
</feature>
<feature type="binding site" evidence="2">
    <location>
        <position position="155"/>
    </location>
    <ligand>
        <name>Zn(2+)</name>
        <dbReference type="ChEBI" id="CHEBI:29105"/>
        <label>2</label>
    </ligand>
</feature>
<feature type="splice variant" id="VSP_022697" description="In isoform 2." evidence="7 8">
    <original>MLKSRLRMFLNELKLLVLTGGGRPRAEPQPRGGRGGGCGWAPFAGCSTRDGDGDEEEYYGSEPRARGLAGDKEPRAGPLPPPAPPLPPPGALDALSLSSSLDSGLRTPQCRICFQGPEQGELLSPCRCDGSVRCTHQPCLIRWISERGSWSCELCYFKYQVLAISTKNPL</original>
    <variation>MVSDKCHILDLIKAQRRQMLILPEGFREGSWSTLLFRATHHLALHPFLGLFGALSPT</variation>
    <location>
        <begin position="1"/>
        <end position="170"/>
    </location>
</feature>
<feature type="sequence variant" id="VAR_030246" description="In dbSNP:rs17856312." evidence="5">
    <original>Q</original>
    <variation>H</variation>
    <location>
        <position position="257"/>
    </location>
</feature>
<feature type="sequence variant" id="VAR_030247" description="In dbSNP:rs17850517." evidence="5">
    <original>T</original>
    <variation>P</variation>
    <location>
        <position position="307"/>
    </location>
</feature>
<feature type="mutagenesis site" description="Diminishes ability to promote MHC-I internalization." evidence="6">
    <original>D</original>
    <variation>N</variation>
    <location>
        <position position="231"/>
    </location>
</feature>